<sequence length="138" mass="14913">MAKAIPKISSRRNGRISSRKGARRIPKGVIHVQASFNNTIVTVTDVRGRVVSWSSAGTSGFKGTRRGTPFAAQTAAANAIRTVVDQGMQRAEVMIKGPGLGRDAALRAIRRSGILLTFVRDVTPMPHNGCRPPKKRRV</sequence>
<geneLocation type="chloroplast"/>
<accession>Q2MI68</accession>
<name>RR11_SOLLC</name>
<proteinExistence type="inferred from homology"/>
<evidence type="ECO:0000255" key="1">
    <source>
        <dbReference type="HAMAP-Rule" id="MF_01310"/>
    </source>
</evidence>
<evidence type="ECO:0000256" key="2">
    <source>
        <dbReference type="SAM" id="MobiDB-lite"/>
    </source>
</evidence>
<evidence type="ECO:0000305" key="3"/>
<dbReference type="EMBL" id="DQ347959">
    <property type="protein sequence ID" value="ABC56332.1"/>
    <property type="molecule type" value="Genomic_DNA"/>
</dbReference>
<dbReference type="EMBL" id="AM087200">
    <property type="protein sequence ID" value="CAJ32427.1"/>
    <property type="molecule type" value="Genomic_DNA"/>
</dbReference>
<dbReference type="RefSeq" id="AP_004961.1">
    <property type="nucleotide sequence ID" value="AC_000188.1"/>
</dbReference>
<dbReference type="RefSeq" id="YP_008563121.1">
    <property type="nucleotide sequence ID" value="NC_007898.3"/>
</dbReference>
<dbReference type="SMR" id="Q2MI68"/>
<dbReference type="FunCoup" id="Q2MI68">
    <property type="interactions" value="1226"/>
</dbReference>
<dbReference type="STRING" id="4081.Q2MI68"/>
<dbReference type="PaxDb" id="4081-Solyc01g007570.2.1"/>
<dbReference type="GeneID" id="3950413"/>
<dbReference type="KEGG" id="sly:3950413"/>
<dbReference type="eggNOG" id="KOG0408">
    <property type="taxonomic scope" value="Eukaryota"/>
</dbReference>
<dbReference type="InParanoid" id="Q2MI68"/>
<dbReference type="OrthoDB" id="1286874at2759"/>
<dbReference type="Proteomes" id="UP000004994">
    <property type="component" value="Chloroplast"/>
</dbReference>
<dbReference type="GO" id="GO:0009507">
    <property type="term" value="C:chloroplast"/>
    <property type="evidence" value="ECO:0007669"/>
    <property type="project" value="UniProtKB-SubCell"/>
</dbReference>
<dbReference type="GO" id="GO:1990904">
    <property type="term" value="C:ribonucleoprotein complex"/>
    <property type="evidence" value="ECO:0007669"/>
    <property type="project" value="UniProtKB-KW"/>
</dbReference>
<dbReference type="GO" id="GO:0005840">
    <property type="term" value="C:ribosome"/>
    <property type="evidence" value="ECO:0007669"/>
    <property type="project" value="UniProtKB-KW"/>
</dbReference>
<dbReference type="GO" id="GO:0019843">
    <property type="term" value="F:rRNA binding"/>
    <property type="evidence" value="ECO:0007669"/>
    <property type="project" value="UniProtKB-UniRule"/>
</dbReference>
<dbReference type="GO" id="GO:0003735">
    <property type="term" value="F:structural constituent of ribosome"/>
    <property type="evidence" value="ECO:0000318"/>
    <property type="project" value="GO_Central"/>
</dbReference>
<dbReference type="GO" id="GO:0006412">
    <property type="term" value="P:translation"/>
    <property type="evidence" value="ECO:0000318"/>
    <property type="project" value="GO_Central"/>
</dbReference>
<dbReference type="FunFam" id="3.30.420.80:FF:000003">
    <property type="entry name" value="30S ribosomal protein S11, chloroplastic"/>
    <property type="match status" value="1"/>
</dbReference>
<dbReference type="Gene3D" id="3.30.420.80">
    <property type="entry name" value="Ribosomal protein S11"/>
    <property type="match status" value="1"/>
</dbReference>
<dbReference type="HAMAP" id="MF_01310">
    <property type="entry name" value="Ribosomal_uS11"/>
    <property type="match status" value="1"/>
</dbReference>
<dbReference type="InterPro" id="IPR001971">
    <property type="entry name" value="Ribosomal_uS11"/>
</dbReference>
<dbReference type="InterPro" id="IPR019981">
    <property type="entry name" value="Ribosomal_uS11_bac-type"/>
</dbReference>
<dbReference type="InterPro" id="IPR018102">
    <property type="entry name" value="Ribosomal_uS11_CS"/>
</dbReference>
<dbReference type="InterPro" id="IPR036967">
    <property type="entry name" value="Ribosomal_uS11_sf"/>
</dbReference>
<dbReference type="NCBIfam" id="NF003698">
    <property type="entry name" value="PRK05309.1"/>
    <property type="match status" value="1"/>
</dbReference>
<dbReference type="NCBIfam" id="TIGR03632">
    <property type="entry name" value="uS11_bact"/>
    <property type="match status" value="1"/>
</dbReference>
<dbReference type="PANTHER" id="PTHR11759">
    <property type="entry name" value="40S RIBOSOMAL PROTEIN S14/30S RIBOSOMAL PROTEIN S11"/>
    <property type="match status" value="1"/>
</dbReference>
<dbReference type="Pfam" id="PF00411">
    <property type="entry name" value="Ribosomal_S11"/>
    <property type="match status" value="1"/>
</dbReference>
<dbReference type="PIRSF" id="PIRSF002131">
    <property type="entry name" value="Ribosomal_S11"/>
    <property type="match status" value="1"/>
</dbReference>
<dbReference type="SUPFAM" id="SSF53137">
    <property type="entry name" value="Translational machinery components"/>
    <property type="match status" value="1"/>
</dbReference>
<dbReference type="PROSITE" id="PS00054">
    <property type="entry name" value="RIBOSOMAL_S11"/>
    <property type="match status" value="1"/>
</dbReference>
<keyword id="KW-0150">Chloroplast</keyword>
<keyword id="KW-0934">Plastid</keyword>
<keyword id="KW-1185">Reference proteome</keyword>
<keyword id="KW-0687">Ribonucleoprotein</keyword>
<keyword id="KW-0689">Ribosomal protein</keyword>
<keyword id="KW-0694">RNA-binding</keyword>
<keyword id="KW-0699">rRNA-binding</keyword>
<organism>
    <name type="scientific">Solanum lycopersicum</name>
    <name type="common">Tomato</name>
    <name type="synonym">Lycopersicon esculentum</name>
    <dbReference type="NCBI Taxonomy" id="4081"/>
    <lineage>
        <taxon>Eukaryota</taxon>
        <taxon>Viridiplantae</taxon>
        <taxon>Streptophyta</taxon>
        <taxon>Embryophyta</taxon>
        <taxon>Tracheophyta</taxon>
        <taxon>Spermatophyta</taxon>
        <taxon>Magnoliopsida</taxon>
        <taxon>eudicotyledons</taxon>
        <taxon>Gunneridae</taxon>
        <taxon>Pentapetalae</taxon>
        <taxon>asterids</taxon>
        <taxon>lamiids</taxon>
        <taxon>Solanales</taxon>
        <taxon>Solanaceae</taxon>
        <taxon>Solanoideae</taxon>
        <taxon>Solaneae</taxon>
        <taxon>Solanum</taxon>
        <taxon>Solanum subgen. Lycopersicon</taxon>
    </lineage>
</organism>
<gene>
    <name evidence="1" type="primary">rps11</name>
</gene>
<feature type="chain" id="PRO_0000230452" description="Small ribosomal subunit protein uS11c">
    <location>
        <begin position="1"/>
        <end position="138"/>
    </location>
</feature>
<feature type="region of interest" description="Disordered" evidence="2">
    <location>
        <begin position="1"/>
        <end position="22"/>
    </location>
</feature>
<feature type="compositionally biased region" description="Basic residues" evidence="2">
    <location>
        <begin position="9"/>
        <end position="22"/>
    </location>
</feature>
<reference key="1">
    <citation type="journal article" date="2006" name="Theor. Appl. Genet.">
        <title>Complete chloroplast genome sequences of Solanum bulbocastanum, Solanum lycopersicum and comparative analyses with other Solanaceae genomes.</title>
        <authorList>
            <person name="Daniell H."/>
            <person name="Lee S.-B."/>
            <person name="Grevich J."/>
            <person name="Saski C."/>
            <person name="Quesada-Vargas T."/>
            <person name="Guda C."/>
            <person name="Tomkins J."/>
            <person name="Jansen R.K."/>
        </authorList>
    </citation>
    <scope>NUCLEOTIDE SEQUENCE [LARGE SCALE GENOMIC DNA]</scope>
    <source>
        <strain>cv. LA3023</strain>
    </source>
</reference>
<reference key="2">
    <citation type="journal article" date="2006" name="J. Mol. Evol.">
        <title>Sequence of the tomato chloroplast DNA and evolutionary comparison of solanaceous plastid genomes.</title>
        <authorList>
            <person name="Kahlau S."/>
            <person name="Aspinall S."/>
            <person name="Gray J.C."/>
            <person name="Bock R."/>
        </authorList>
    </citation>
    <scope>NUCLEOTIDE SEQUENCE [LARGE SCALE GENOMIC DNA]</scope>
    <source>
        <strain>cv. IPA-6</strain>
    </source>
</reference>
<protein>
    <recommendedName>
        <fullName evidence="1">Small ribosomal subunit protein uS11c</fullName>
    </recommendedName>
    <alternativeName>
        <fullName evidence="3">30S ribosomal protein S11, chloroplastic</fullName>
    </alternativeName>
</protein>
<comment type="subunit">
    <text evidence="1">Part of the 30S ribosomal subunit.</text>
</comment>
<comment type="subcellular location">
    <subcellularLocation>
        <location>Plastid</location>
        <location>Chloroplast</location>
    </subcellularLocation>
</comment>
<comment type="similarity">
    <text evidence="1">Belongs to the universal ribosomal protein uS11 family.</text>
</comment>